<feature type="initiator methionine" description="Removed" evidence="1">
    <location>
        <position position="1"/>
    </location>
</feature>
<feature type="chain" id="PRO_0000100246" description="Cold shock-like protein CspC">
    <location>
        <begin position="2"/>
        <end position="69"/>
    </location>
</feature>
<feature type="domain" description="CSD">
    <location>
        <begin position="6"/>
        <end position="66"/>
    </location>
</feature>
<feature type="sequence conflict" description="In Ref. 2; AAP16899." evidence="2" ref="2">
    <original>L</original>
    <variation>F</variation>
    <location>
        <position position="41"/>
    </location>
</feature>
<protein>
    <recommendedName>
        <fullName>Cold shock-like protein CspC</fullName>
        <shortName>CSP-C</shortName>
    </recommendedName>
</protein>
<gene>
    <name type="primary">cspC</name>
    <name type="ordered locus">SF1403</name>
    <name type="ordered locus">S1518</name>
</gene>
<reference key="1">
    <citation type="journal article" date="2002" name="Nucleic Acids Res.">
        <title>Genome sequence of Shigella flexneri 2a: insights into pathogenicity through comparison with genomes of Escherichia coli K12 and O157.</title>
        <authorList>
            <person name="Jin Q."/>
            <person name="Yuan Z."/>
            <person name="Xu J."/>
            <person name="Wang Y."/>
            <person name="Shen Y."/>
            <person name="Lu W."/>
            <person name="Wang J."/>
            <person name="Liu H."/>
            <person name="Yang J."/>
            <person name="Yang F."/>
            <person name="Zhang X."/>
            <person name="Zhang J."/>
            <person name="Yang G."/>
            <person name="Wu H."/>
            <person name="Qu D."/>
            <person name="Dong J."/>
            <person name="Sun L."/>
            <person name="Xue Y."/>
            <person name="Zhao A."/>
            <person name="Gao Y."/>
            <person name="Zhu J."/>
            <person name="Kan B."/>
            <person name="Ding K."/>
            <person name="Chen S."/>
            <person name="Cheng H."/>
            <person name="Yao Z."/>
            <person name="He B."/>
            <person name="Chen R."/>
            <person name="Ma D."/>
            <person name="Qiang B."/>
            <person name="Wen Y."/>
            <person name="Hou Y."/>
            <person name="Yu J."/>
        </authorList>
    </citation>
    <scope>NUCLEOTIDE SEQUENCE [LARGE SCALE GENOMIC DNA]</scope>
    <source>
        <strain>301 / Serotype 2a</strain>
    </source>
</reference>
<reference key="2">
    <citation type="journal article" date="2003" name="Infect. Immun.">
        <title>Complete genome sequence and comparative genomics of Shigella flexneri serotype 2a strain 2457T.</title>
        <authorList>
            <person name="Wei J."/>
            <person name="Goldberg M.B."/>
            <person name="Burland V."/>
            <person name="Venkatesan M.M."/>
            <person name="Deng W."/>
            <person name="Fournier G."/>
            <person name="Mayhew G.F."/>
            <person name="Plunkett G. III"/>
            <person name="Rose D.J."/>
            <person name="Darling A."/>
            <person name="Mau B."/>
            <person name="Perna N.T."/>
            <person name="Payne S.M."/>
            <person name="Runyen-Janecky L.J."/>
            <person name="Zhou S."/>
            <person name="Schwartz D.C."/>
            <person name="Blattner F.R."/>
        </authorList>
    </citation>
    <scope>NUCLEOTIDE SEQUENCE [LARGE SCALE GENOMIC DNA]</scope>
    <source>
        <strain>ATCC 700930 / 2457T / Serotype 2a</strain>
    </source>
</reference>
<dbReference type="EMBL" id="AE005674">
    <property type="protein sequence ID" value="AAN43004.1"/>
    <property type="molecule type" value="Genomic_DNA"/>
</dbReference>
<dbReference type="EMBL" id="AE014073">
    <property type="protein sequence ID" value="AAP16899.1"/>
    <property type="molecule type" value="Genomic_DNA"/>
</dbReference>
<dbReference type="RefSeq" id="NP_707297.1">
    <property type="nucleotide sequence ID" value="NC_004337.2"/>
</dbReference>
<dbReference type="SMR" id="Q83RI9"/>
<dbReference type="STRING" id="198214.SF1403"/>
<dbReference type="PaxDb" id="198214-SF1403"/>
<dbReference type="GeneID" id="1024611"/>
<dbReference type="KEGG" id="sfl:SF1403"/>
<dbReference type="KEGG" id="sfx:S1518"/>
<dbReference type="PATRIC" id="fig|198214.7.peg.1653"/>
<dbReference type="HOGENOM" id="CLU_117621_2_1_6"/>
<dbReference type="Proteomes" id="UP000001006">
    <property type="component" value="Chromosome"/>
</dbReference>
<dbReference type="Proteomes" id="UP000002673">
    <property type="component" value="Chromosome"/>
</dbReference>
<dbReference type="GO" id="GO:0005829">
    <property type="term" value="C:cytosol"/>
    <property type="evidence" value="ECO:0007669"/>
    <property type="project" value="UniProtKB-ARBA"/>
</dbReference>
<dbReference type="GO" id="GO:0003677">
    <property type="term" value="F:DNA binding"/>
    <property type="evidence" value="ECO:0007669"/>
    <property type="project" value="UniProtKB-KW"/>
</dbReference>
<dbReference type="CDD" id="cd04458">
    <property type="entry name" value="CSP_CDS"/>
    <property type="match status" value="1"/>
</dbReference>
<dbReference type="FunFam" id="2.40.50.140:FF:000006">
    <property type="entry name" value="Cold shock protein CspC"/>
    <property type="match status" value="1"/>
</dbReference>
<dbReference type="Gene3D" id="2.40.50.140">
    <property type="entry name" value="Nucleic acid-binding proteins"/>
    <property type="match status" value="1"/>
</dbReference>
<dbReference type="InterPro" id="IPR012156">
    <property type="entry name" value="Cold_shock_CspA"/>
</dbReference>
<dbReference type="InterPro" id="IPR050181">
    <property type="entry name" value="Cold_shock_domain"/>
</dbReference>
<dbReference type="InterPro" id="IPR011129">
    <property type="entry name" value="CSD"/>
</dbReference>
<dbReference type="InterPro" id="IPR019844">
    <property type="entry name" value="CSD_CS"/>
</dbReference>
<dbReference type="InterPro" id="IPR002059">
    <property type="entry name" value="CSP_DNA-bd"/>
</dbReference>
<dbReference type="InterPro" id="IPR012340">
    <property type="entry name" value="NA-bd_OB-fold"/>
</dbReference>
<dbReference type="NCBIfam" id="NF007062">
    <property type="entry name" value="PRK09507.1"/>
    <property type="match status" value="1"/>
</dbReference>
<dbReference type="NCBIfam" id="NF008190">
    <property type="entry name" value="PRK10943.1"/>
    <property type="match status" value="1"/>
</dbReference>
<dbReference type="PANTHER" id="PTHR11544">
    <property type="entry name" value="COLD SHOCK DOMAIN CONTAINING PROTEINS"/>
    <property type="match status" value="1"/>
</dbReference>
<dbReference type="Pfam" id="PF00313">
    <property type="entry name" value="CSD"/>
    <property type="match status" value="1"/>
</dbReference>
<dbReference type="PIRSF" id="PIRSF002599">
    <property type="entry name" value="Cold_shock_A"/>
    <property type="match status" value="1"/>
</dbReference>
<dbReference type="PRINTS" id="PR00050">
    <property type="entry name" value="COLDSHOCK"/>
</dbReference>
<dbReference type="SMART" id="SM00357">
    <property type="entry name" value="CSP"/>
    <property type="match status" value="1"/>
</dbReference>
<dbReference type="SUPFAM" id="SSF50249">
    <property type="entry name" value="Nucleic acid-binding proteins"/>
    <property type="match status" value="1"/>
</dbReference>
<dbReference type="PROSITE" id="PS00352">
    <property type="entry name" value="CSD_1"/>
    <property type="match status" value="1"/>
</dbReference>
<dbReference type="PROSITE" id="PS51857">
    <property type="entry name" value="CSD_2"/>
    <property type="match status" value="1"/>
</dbReference>
<name>CSPC_SHIFL</name>
<evidence type="ECO:0000250" key="1"/>
<evidence type="ECO:0000305" key="2"/>
<accession>Q83RI9</accession>
<sequence>MAKIKGQVKWFNESKGFGFITPADGSKDVFVHFSAIQGNGLKTLAEGQNVEFEIQDGQKGPAAVNVTAI</sequence>
<keyword id="KW-0010">Activator</keyword>
<keyword id="KW-0963">Cytoplasm</keyword>
<keyword id="KW-0238">DNA-binding</keyword>
<keyword id="KW-1185">Reference proteome</keyword>
<keyword id="KW-0804">Transcription</keyword>
<keyword id="KW-0805">Transcription regulation</keyword>
<comment type="subcellular location">
    <subcellularLocation>
        <location evidence="1">Cytoplasm</location>
    </subcellularLocation>
</comment>
<organism>
    <name type="scientific">Shigella flexneri</name>
    <dbReference type="NCBI Taxonomy" id="623"/>
    <lineage>
        <taxon>Bacteria</taxon>
        <taxon>Pseudomonadati</taxon>
        <taxon>Pseudomonadota</taxon>
        <taxon>Gammaproteobacteria</taxon>
        <taxon>Enterobacterales</taxon>
        <taxon>Enterobacteriaceae</taxon>
        <taxon>Shigella</taxon>
    </lineage>
</organism>
<proteinExistence type="inferred from homology"/>